<reference key="1">
    <citation type="submission" date="2007-10" db="EMBL/GenBank/DDBJ databases">
        <title>Complete sequence of chromosome of Desulforudis audaxviator MP104C.</title>
        <authorList>
            <person name="Copeland A."/>
            <person name="Lucas S."/>
            <person name="Lapidus A."/>
            <person name="Barry K."/>
            <person name="Glavina del Rio T."/>
            <person name="Dalin E."/>
            <person name="Tice H."/>
            <person name="Bruce D."/>
            <person name="Pitluck S."/>
            <person name="Lowry S.R."/>
            <person name="Larimer F."/>
            <person name="Land M.L."/>
            <person name="Hauser L."/>
            <person name="Kyrpides N."/>
            <person name="Ivanova N.N."/>
            <person name="Richardson P."/>
        </authorList>
    </citation>
    <scope>NUCLEOTIDE SEQUENCE [LARGE SCALE GENOMIC DNA]</scope>
    <source>
        <strain>MP104C</strain>
    </source>
</reference>
<proteinExistence type="inferred from homology"/>
<name>TGT_DESAP</name>
<evidence type="ECO:0000255" key="1">
    <source>
        <dbReference type="HAMAP-Rule" id="MF_00168"/>
    </source>
</evidence>
<gene>
    <name evidence="1" type="primary">tgt</name>
    <name type="ordered locus">Daud_1359</name>
</gene>
<dbReference type="EC" id="2.4.2.29" evidence="1"/>
<dbReference type="EMBL" id="CP000860">
    <property type="protein sequence ID" value="ACA59868.1"/>
    <property type="molecule type" value="Genomic_DNA"/>
</dbReference>
<dbReference type="RefSeq" id="WP_012302453.1">
    <property type="nucleotide sequence ID" value="NC_010424.1"/>
</dbReference>
<dbReference type="SMR" id="B1I4K8"/>
<dbReference type="STRING" id="477974.Daud_1359"/>
<dbReference type="KEGG" id="dau:Daud_1359"/>
<dbReference type="eggNOG" id="COG0343">
    <property type="taxonomic scope" value="Bacteria"/>
</dbReference>
<dbReference type="HOGENOM" id="CLU_022060_0_1_9"/>
<dbReference type="OrthoDB" id="9805417at2"/>
<dbReference type="UniPathway" id="UPA00392"/>
<dbReference type="Proteomes" id="UP000008544">
    <property type="component" value="Chromosome"/>
</dbReference>
<dbReference type="GO" id="GO:0005829">
    <property type="term" value="C:cytosol"/>
    <property type="evidence" value="ECO:0007669"/>
    <property type="project" value="TreeGrafter"/>
</dbReference>
<dbReference type="GO" id="GO:0046872">
    <property type="term" value="F:metal ion binding"/>
    <property type="evidence" value="ECO:0007669"/>
    <property type="project" value="UniProtKB-KW"/>
</dbReference>
<dbReference type="GO" id="GO:0008479">
    <property type="term" value="F:tRNA-guanosine(34) queuine transglycosylase activity"/>
    <property type="evidence" value="ECO:0007669"/>
    <property type="project" value="UniProtKB-UniRule"/>
</dbReference>
<dbReference type="GO" id="GO:0008616">
    <property type="term" value="P:queuosine biosynthetic process"/>
    <property type="evidence" value="ECO:0007669"/>
    <property type="project" value="UniProtKB-UniRule"/>
</dbReference>
<dbReference type="GO" id="GO:0002099">
    <property type="term" value="P:tRNA wobble guanine modification"/>
    <property type="evidence" value="ECO:0007669"/>
    <property type="project" value="TreeGrafter"/>
</dbReference>
<dbReference type="GO" id="GO:0101030">
    <property type="term" value="P:tRNA-guanine transglycosylation"/>
    <property type="evidence" value="ECO:0007669"/>
    <property type="project" value="InterPro"/>
</dbReference>
<dbReference type="FunFam" id="3.20.20.105:FF:000001">
    <property type="entry name" value="Queuine tRNA-ribosyltransferase"/>
    <property type="match status" value="1"/>
</dbReference>
<dbReference type="Gene3D" id="3.20.20.105">
    <property type="entry name" value="Queuine tRNA-ribosyltransferase-like"/>
    <property type="match status" value="1"/>
</dbReference>
<dbReference type="HAMAP" id="MF_00168">
    <property type="entry name" value="Q_tRNA_Tgt"/>
    <property type="match status" value="1"/>
</dbReference>
<dbReference type="InterPro" id="IPR050076">
    <property type="entry name" value="ArchSynthase1/Queuine_TRR"/>
</dbReference>
<dbReference type="InterPro" id="IPR004803">
    <property type="entry name" value="TGT"/>
</dbReference>
<dbReference type="InterPro" id="IPR036511">
    <property type="entry name" value="TGT-like_sf"/>
</dbReference>
<dbReference type="InterPro" id="IPR002616">
    <property type="entry name" value="tRNA_ribo_trans-like"/>
</dbReference>
<dbReference type="NCBIfam" id="TIGR00430">
    <property type="entry name" value="Q_tRNA_tgt"/>
    <property type="match status" value="1"/>
</dbReference>
<dbReference type="NCBIfam" id="TIGR00449">
    <property type="entry name" value="tgt_general"/>
    <property type="match status" value="1"/>
</dbReference>
<dbReference type="PANTHER" id="PTHR46499">
    <property type="entry name" value="QUEUINE TRNA-RIBOSYLTRANSFERASE"/>
    <property type="match status" value="1"/>
</dbReference>
<dbReference type="PANTHER" id="PTHR46499:SF1">
    <property type="entry name" value="QUEUINE TRNA-RIBOSYLTRANSFERASE"/>
    <property type="match status" value="1"/>
</dbReference>
<dbReference type="Pfam" id="PF01702">
    <property type="entry name" value="TGT"/>
    <property type="match status" value="1"/>
</dbReference>
<dbReference type="SUPFAM" id="SSF51713">
    <property type="entry name" value="tRNA-guanine transglycosylase"/>
    <property type="match status" value="1"/>
</dbReference>
<sequence length="372" mass="41495">MGILFEVLKQDSRTRARLGRLTTPHGVVETPVFMPVGTQATVKTMTPEEVRDLGARIILSNTYHLYLRPGHELVREAGGLHRFMHWNGPILTDSGGFQVFSLAPLRKLSDEGVEFRSHIDGSRHFFTPEKVVAVQEALGSDIAMVLDECAPYPCSYKDARTATERTTRWAARARAAWNSDGATALFGIIQGSVYRDLREESTRALVDLDFPGYGIGGLSVGEPKPLMYEALEWVIPLIPEDRPRYLMGVGSPDCLFEGIARGVDMFDCVLPTRMARHGAVFTHTGRLVVRNAPNARDFGPLDPGCTCYTCRHFSRAYVHHLLRAGEVLGIRLTTIHNLHFLLDLARRIREAIAEDRFHSLKEQFLAACLTPA</sequence>
<accession>B1I4K8</accession>
<organism>
    <name type="scientific">Desulforudis audaxviator (strain MP104C)</name>
    <dbReference type="NCBI Taxonomy" id="477974"/>
    <lineage>
        <taxon>Bacteria</taxon>
        <taxon>Bacillati</taxon>
        <taxon>Bacillota</taxon>
        <taxon>Clostridia</taxon>
        <taxon>Thermoanaerobacterales</taxon>
        <taxon>Candidatus Desulforudaceae</taxon>
        <taxon>Candidatus Desulforudis</taxon>
    </lineage>
</organism>
<keyword id="KW-0328">Glycosyltransferase</keyword>
<keyword id="KW-0479">Metal-binding</keyword>
<keyword id="KW-0671">Queuosine biosynthesis</keyword>
<keyword id="KW-1185">Reference proteome</keyword>
<keyword id="KW-0808">Transferase</keyword>
<keyword id="KW-0819">tRNA processing</keyword>
<keyword id="KW-0862">Zinc</keyword>
<comment type="function">
    <text evidence="1">Catalyzes the base-exchange of a guanine (G) residue with the queuine precursor 7-aminomethyl-7-deazaguanine (PreQ1) at position 34 (anticodon wobble position) in tRNAs with GU(N) anticodons (tRNA-Asp, -Asn, -His and -Tyr). Catalysis occurs through a double-displacement mechanism. The nucleophile active site attacks the C1' of nucleotide 34 to detach the guanine base from the RNA, forming a covalent enzyme-RNA intermediate. The proton acceptor active site deprotonates the incoming PreQ1, allowing a nucleophilic attack on the C1' of the ribose to form the product. After dissociation, two additional enzymatic reactions on the tRNA convert PreQ1 to queuine (Q), resulting in the hypermodified nucleoside queuosine (7-(((4,5-cis-dihydroxy-2-cyclopenten-1-yl)amino)methyl)-7-deazaguanosine).</text>
</comment>
<comment type="catalytic activity">
    <reaction evidence="1">
        <text>7-aminomethyl-7-carbaguanine + guanosine(34) in tRNA = 7-aminomethyl-7-carbaguanosine(34) in tRNA + guanine</text>
        <dbReference type="Rhea" id="RHEA:24104"/>
        <dbReference type="Rhea" id="RHEA-COMP:10341"/>
        <dbReference type="Rhea" id="RHEA-COMP:10342"/>
        <dbReference type="ChEBI" id="CHEBI:16235"/>
        <dbReference type="ChEBI" id="CHEBI:58703"/>
        <dbReference type="ChEBI" id="CHEBI:74269"/>
        <dbReference type="ChEBI" id="CHEBI:82833"/>
        <dbReference type="EC" id="2.4.2.29"/>
    </reaction>
</comment>
<comment type="cofactor">
    <cofactor evidence="1">
        <name>Zn(2+)</name>
        <dbReference type="ChEBI" id="CHEBI:29105"/>
    </cofactor>
    <text evidence="1">Binds 1 zinc ion per subunit.</text>
</comment>
<comment type="pathway">
    <text evidence="1">tRNA modification; tRNA-queuosine biosynthesis.</text>
</comment>
<comment type="subunit">
    <text evidence="1">Homodimer. Within each dimer, one monomer is responsible for RNA recognition and catalysis, while the other monomer binds to the replacement base PreQ1.</text>
</comment>
<comment type="similarity">
    <text evidence="1">Belongs to the queuine tRNA-ribosyltransferase family.</text>
</comment>
<feature type="chain" id="PRO_1000097540" description="Queuine tRNA-ribosyltransferase">
    <location>
        <begin position="1"/>
        <end position="372"/>
    </location>
</feature>
<feature type="region of interest" description="RNA binding" evidence="1">
    <location>
        <begin position="248"/>
        <end position="254"/>
    </location>
</feature>
<feature type="region of interest" description="RNA binding; important for wobble base 34 recognition" evidence="1">
    <location>
        <begin position="272"/>
        <end position="276"/>
    </location>
</feature>
<feature type="active site" description="Proton acceptor" evidence="1">
    <location>
        <position position="93"/>
    </location>
</feature>
<feature type="active site" description="Nucleophile" evidence="1">
    <location>
        <position position="267"/>
    </location>
</feature>
<feature type="binding site" evidence="1">
    <location>
        <begin position="93"/>
        <end position="97"/>
    </location>
    <ligand>
        <name>substrate</name>
    </ligand>
</feature>
<feature type="binding site" evidence="1">
    <location>
        <position position="147"/>
    </location>
    <ligand>
        <name>substrate</name>
    </ligand>
</feature>
<feature type="binding site" evidence="1">
    <location>
        <position position="190"/>
    </location>
    <ligand>
        <name>substrate</name>
    </ligand>
</feature>
<feature type="binding site" evidence="1">
    <location>
        <position position="217"/>
    </location>
    <ligand>
        <name>substrate</name>
    </ligand>
</feature>
<feature type="binding site" evidence="1">
    <location>
        <position position="305"/>
    </location>
    <ligand>
        <name>Zn(2+)</name>
        <dbReference type="ChEBI" id="CHEBI:29105"/>
    </ligand>
</feature>
<feature type="binding site" evidence="1">
    <location>
        <position position="307"/>
    </location>
    <ligand>
        <name>Zn(2+)</name>
        <dbReference type="ChEBI" id="CHEBI:29105"/>
    </ligand>
</feature>
<feature type="binding site" evidence="1">
    <location>
        <position position="310"/>
    </location>
    <ligand>
        <name>Zn(2+)</name>
        <dbReference type="ChEBI" id="CHEBI:29105"/>
    </ligand>
</feature>
<feature type="binding site" evidence="1">
    <location>
        <position position="336"/>
    </location>
    <ligand>
        <name>Zn(2+)</name>
        <dbReference type="ChEBI" id="CHEBI:29105"/>
    </ligand>
</feature>
<protein>
    <recommendedName>
        <fullName evidence="1">Queuine tRNA-ribosyltransferase</fullName>
        <ecNumber evidence="1">2.4.2.29</ecNumber>
    </recommendedName>
    <alternativeName>
        <fullName evidence="1">Guanine insertion enzyme</fullName>
    </alternativeName>
    <alternativeName>
        <fullName evidence="1">tRNA-guanine transglycosylase</fullName>
    </alternativeName>
</protein>